<feature type="chain" id="PRO_0000239881" description="Urease subunit alpha 2">
    <location>
        <begin position="1"/>
        <end position="611"/>
    </location>
</feature>
<feature type="domain" description="Urease" evidence="1">
    <location>
        <begin position="154"/>
        <end position="611"/>
    </location>
</feature>
<feature type="region of interest" description="Disordered" evidence="2">
    <location>
        <begin position="411"/>
        <end position="434"/>
    </location>
</feature>
<feature type="compositionally biased region" description="Polar residues" evidence="2">
    <location>
        <begin position="418"/>
        <end position="434"/>
    </location>
</feature>
<feature type="active site" description="Proton donor" evidence="1">
    <location>
        <position position="345"/>
    </location>
</feature>
<feature type="binding site" evidence="1">
    <location>
        <position position="159"/>
    </location>
    <ligand>
        <name>Ni(2+)</name>
        <dbReference type="ChEBI" id="CHEBI:49786"/>
        <label>1</label>
    </ligand>
</feature>
<feature type="binding site" evidence="1">
    <location>
        <position position="161"/>
    </location>
    <ligand>
        <name>Ni(2+)</name>
        <dbReference type="ChEBI" id="CHEBI:49786"/>
        <label>1</label>
    </ligand>
</feature>
<feature type="binding site" description="via carbamate group" evidence="1">
    <location>
        <position position="242"/>
    </location>
    <ligand>
        <name>Ni(2+)</name>
        <dbReference type="ChEBI" id="CHEBI:49786"/>
        <label>1</label>
    </ligand>
</feature>
<feature type="binding site" description="via carbamate group" evidence="1">
    <location>
        <position position="242"/>
    </location>
    <ligand>
        <name>Ni(2+)</name>
        <dbReference type="ChEBI" id="CHEBI:49786"/>
        <label>2</label>
    </ligand>
</feature>
<feature type="binding site" evidence="1">
    <location>
        <position position="244"/>
    </location>
    <ligand>
        <name>substrate</name>
    </ligand>
</feature>
<feature type="binding site" evidence="1">
    <location>
        <position position="271"/>
    </location>
    <ligand>
        <name>Ni(2+)</name>
        <dbReference type="ChEBI" id="CHEBI:49786"/>
        <label>2</label>
    </ligand>
</feature>
<feature type="binding site" evidence="1">
    <location>
        <position position="297"/>
    </location>
    <ligand>
        <name>Ni(2+)</name>
        <dbReference type="ChEBI" id="CHEBI:49786"/>
        <label>2</label>
    </ligand>
</feature>
<feature type="binding site" evidence="1">
    <location>
        <position position="385"/>
    </location>
    <ligand>
        <name>Ni(2+)</name>
        <dbReference type="ChEBI" id="CHEBI:49786"/>
        <label>1</label>
    </ligand>
</feature>
<feature type="modified residue" description="N6-carboxylysine" evidence="1">
    <location>
        <position position="242"/>
    </location>
</feature>
<organism>
    <name type="scientific">Psychrobacter cryohalolentis (strain ATCC BAA-1226 / DSM 17306 / VKM B-2378 / K5)</name>
    <dbReference type="NCBI Taxonomy" id="335284"/>
    <lineage>
        <taxon>Bacteria</taxon>
        <taxon>Pseudomonadati</taxon>
        <taxon>Pseudomonadota</taxon>
        <taxon>Gammaproteobacteria</taxon>
        <taxon>Moraxellales</taxon>
        <taxon>Moraxellaceae</taxon>
        <taxon>Psychrobacter</taxon>
    </lineage>
</organism>
<reference key="1">
    <citation type="submission" date="2006-03" db="EMBL/GenBank/DDBJ databases">
        <title>Complete sequence of chromosome of Psychrobacter cryohalolentis K5.</title>
        <authorList>
            <consortium name="US DOE Joint Genome Institute"/>
            <person name="Copeland A."/>
            <person name="Lucas S."/>
            <person name="Lapidus A."/>
            <person name="Barry K."/>
            <person name="Detter J.C."/>
            <person name="Glavina T."/>
            <person name="Hammon N."/>
            <person name="Israni S."/>
            <person name="Dalin E."/>
            <person name="Tice H."/>
            <person name="Pitluck S."/>
            <person name="Brettin T."/>
            <person name="Bruce D."/>
            <person name="Han C."/>
            <person name="Tapia R."/>
            <person name="Sims D.R."/>
            <person name="Gilna P."/>
            <person name="Schmutz J."/>
            <person name="Larimer F."/>
            <person name="Land M."/>
            <person name="Hauser L."/>
            <person name="Kyrpides N."/>
            <person name="Kim E."/>
            <person name="Richardson P."/>
        </authorList>
    </citation>
    <scope>NUCLEOTIDE SEQUENCE [LARGE SCALE GENOMIC DNA]</scope>
    <source>
        <strain>ATCC BAA-1226 / DSM 17306 / VKM B-2378 / K5</strain>
    </source>
</reference>
<evidence type="ECO:0000255" key="1">
    <source>
        <dbReference type="HAMAP-Rule" id="MF_01953"/>
    </source>
</evidence>
<evidence type="ECO:0000256" key="2">
    <source>
        <dbReference type="SAM" id="MobiDB-lite"/>
    </source>
</evidence>
<evidence type="ECO:0000305" key="3"/>
<dbReference type="EC" id="3.5.1.5" evidence="1"/>
<dbReference type="EMBL" id="CP000323">
    <property type="protein sequence ID" value="ABE74767.1"/>
    <property type="status" value="ALT_INIT"/>
    <property type="molecule type" value="Genomic_DNA"/>
</dbReference>
<dbReference type="RefSeq" id="WP_049751829.1">
    <property type="nucleotide sequence ID" value="NC_007969.1"/>
</dbReference>
<dbReference type="SMR" id="Q1QC36"/>
<dbReference type="STRING" id="335284.Pcryo_0986"/>
<dbReference type="KEGG" id="pcr:Pcryo_0986"/>
<dbReference type="eggNOG" id="COG0804">
    <property type="taxonomic scope" value="Bacteria"/>
</dbReference>
<dbReference type="eggNOG" id="COG0832">
    <property type="taxonomic scope" value="Bacteria"/>
</dbReference>
<dbReference type="HOGENOM" id="CLU_000980_2_0_6"/>
<dbReference type="UniPathway" id="UPA00258">
    <property type="reaction ID" value="UER00370"/>
</dbReference>
<dbReference type="Proteomes" id="UP000002425">
    <property type="component" value="Chromosome"/>
</dbReference>
<dbReference type="GO" id="GO:0005737">
    <property type="term" value="C:cytoplasm"/>
    <property type="evidence" value="ECO:0007669"/>
    <property type="project" value="UniProtKB-SubCell"/>
</dbReference>
<dbReference type="GO" id="GO:0016151">
    <property type="term" value="F:nickel cation binding"/>
    <property type="evidence" value="ECO:0007669"/>
    <property type="project" value="UniProtKB-UniRule"/>
</dbReference>
<dbReference type="GO" id="GO:0009039">
    <property type="term" value="F:urease activity"/>
    <property type="evidence" value="ECO:0007669"/>
    <property type="project" value="UniProtKB-UniRule"/>
</dbReference>
<dbReference type="GO" id="GO:0043419">
    <property type="term" value="P:urea catabolic process"/>
    <property type="evidence" value="ECO:0007669"/>
    <property type="project" value="UniProtKB-UniRule"/>
</dbReference>
<dbReference type="CDD" id="cd00375">
    <property type="entry name" value="Urease_alpha"/>
    <property type="match status" value="1"/>
</dbReference>
<dbReference type="Gene3D" id="3.20.20.140">
    <property type="entry name" value="Metal-dependent hydrolases"/>
    <property type="match status" value="1"/>
</dbReference>
<dbReference type="Gene3D" id="2.30.40.10">
    <property type="entry name" value="Urease, subunit C, domain 1"/>
    <property type="match status" value="1"/>
</dbReference>
<dbReference type="HAMAP" id="MF_01953">
    <property type="entry name" value="Urease_alpha"/>
    <property type="match status" value="1"/>
</dbReference>
<dbReference type="InterPro" id="IPR006680">
    <property type="entry name" value="Amidohydro-rel"/>
</dbReference>
<dbReference type="InterPro" id="IPR011059">
    <property type="entry name" value="Metal-dep_hydrolase_composite"/>
</dbReference>
<dbReference type="InterPro" id="IPR032466">
    <property type="entry name" value="Metal_Hydrolase"/>
</dbReference>
<dbReference type="InterPro" id="IPR011612">
    <property type="entry name" value="Urease_alpha_N_dom"/>
</dbReference>
<dbReference type="InterPro" id="IPR050112">
    <property type="entry name" value="Urease_alpha_subunit"/>
</dbReference>
<dbReference type="InterPro" id="IPR017950">
    <property type="entry name" value="Urease_AS"/>
</dbReference>
<dbReference type="InterPro" id="IPR005848">
    <property type="entry name" value="Urease_asu"/>
</dbReference>
<dbReference type="InterPro" id="IPR017951">
    <property type="entry name" value="Urease_asu_c"/>
</dbReference>
<dbReference type="InterPro" id="IPR029754">
    <property type="entry name" value="Urease_Ni-bd"/>
</dbReference>
<dbReference type="NCBIfam" id="NF009686">
    <property type="entry name" value="PRK13207.1"/>
    <property type="match status" value="1"/>
</dbReference>
<dbReference type="NCBIfam" id="TIGR01792">
    <property type="entry name" value="urease_alph"/>
    <property type="match status" value="1"/>
</dbReference>
<dbReference type="PANTHER" id="PTHR43440">
    <property type="entry name" value="UREASE"/>
    <property type="match status" value="1"/>
</dbReference>
<dbReference type="PANTHER" id="PTHR43440:SF1">
    <property type="entry name" value="UREASE"/>
    <property type="match status" value="1"/>
</dbReference>
<dbReference type="Pfam" id="PF01979">
    <property type="entry name" value="Amidohydro_1"/>
    <property type="match status" value="1"/>
</dbReference>
<dbReference type="Pfam" id="PF00449">
    <property type="entry name" value="Urease_alpha"/>
    <property type="match status" value="1"/>
</dbReference>
<dbReference type="PRINTS" id="PR01752">
    <property type="entry name" value="UREASE"/>
</dbReference>
<dbReference type="SUPFAM" id="SSF51338">
    <property type="entry name" value="Composite domain of metallo-dependent hydrolases"/>
    <property type="match status" value="2"/>
</dbReference>
<dbReference type="SUPFAM" id="SSF51556">
    <property type="entry name" value="Metallo-dependent hydrolases"/>
    <property type="match status" value="1"/>
</dbReference>
<dbReference type="PROSITE" id="PS01120">
    <property type="entry name" value="UREASE_1"/>
    <property type="match status" value="1"/>
</dbReference>
<dbReference type="PROSITE" id="PS00145">
    <property type="entry name" value="UREASE_2"/>
    <property type="match status" value="1"/>
</dbReference>
<dbReference type="PROSITE" id="PS51368">
    <property type="entry name" value="UREASE_3"/>
    <property type="match status" value="1"/>
</dbReference>
<keyword id="KW-0963">Cytoplasm</keyword>
<keyword id="KW-0378">Hydrolase</keyword>
<keyword id="KW-0479">Metal-binding</keyword>
<keyword id="KW-0533">Nickel</keyword>
<gene>
    <name evidence="1" type="primary">ureC2</name>
    <name type="ordered locus">Pcryo_0986</name>
</gene>
<sequence>MGVVDPKTSQNTSKKRIDRRIYAEHFGPTTGDKVRLADTNLWLEVEYDLTSHIDHQPDIDSVNIGEEVKFGGGKVIRDGMGQSQLLGEQVADTIITNALIVDYSGIYKADIAIKEGRISGIGKAGNPDIQPNVTLPIGAATEIIAGEGKILTAGGIDSHIHFIAPQQCETALMSGVTTMLGGGTGPAEGTLATTCTPGAYHIHSMLKATDAIPMNIGFLGKGNVSLPAPIVEQIEAGAIGLKLHEDWGSTPKAIDNCLSVAEEYDVQVAIHTDTLNESGYLDSTLGAFKDRCIHTFHTEGAGGGHAPDILKAIGETNVLPSSTNPTRPFTINTIDEHLDMLMVCHHLSPAIAEDVAFAESRIRKETIAAEDILQDMGAISMMSSDSQAMGRVGEVIIRTWQTADKMKAQRGHLAPDQSAKTEQSLDNIMLSPTDSDSGNDNFRIKRYLAKYTINPAITHGISDEVGSLELGKWADLVLWSPAFFGVKPDLIIKGGLIAAAPMGDPNASISTPQPVHYRSMFGSFPKTVAQTCITFMSSAAIDKGVDRQLGLEKVIKAVHNIRKVRKQDMKFNSYCPQMEVNPETYEVYADGELLTCEPAEHLPMAQRYFLF</sequence>
<proteinExistence type="inferred from homology"/>
<accession>Q1QC36</accession>
<name>URE12_PSYCK</name>
<comment type="catalytic activity">
    <reaction evidence="1">
        <text>urea + 2 H2O + H(+) = hydrogencarbonate + 2 NH4(+)</text>
        <dbReference type="Rhea" id="RHEA:20557"/>
        <dbReference type="ChEBI" id="CHEBI:15377"/>
        <dbReference type="ChEBI" id="CHEBI:15378"/>
        <dbReference type="ChEBI" id="CHEBI:16199"/>
        <dbReference type="ChEBI" id="CHEBI:17544"/>
        <dbReference type="ChEBI" id="CHEBI:28938"/>
        <dbReference type="EC" id="3.5.1.5"/>
    </reaction>
</comment>
<comment type="cofactor">
    <cofactor evidence="1">
        <name>Ni cation</name>
        <dbReference type="ChEBI" id="CHEBI:25516"/>
    </cofactor>
    <text evidence="1">Binds 2 nickel ions per subunit.</text>
</comment>
<comment type="pathway">
    <text evidence="1">Nitrogen metabolism; urea degradation; CO(2) and NH(3) from urea (urease route): step 1/1.</text>
</comment>
<comment type="subunit">
    <text evidence="1">Heterotrimer of UreA (gamma), UreB (beta) and UreC (alpha) subunits. Three heterotrimers associate to form the active enzyme.</text>
</comment>
<comment type="subcellular location">
    <subcellularLocation>
        <location evidence="1">Cytoplasm</location>
    </subcellularLocation>
</comment>
<comment type="PTM">
    <text evidence="1">Carboxylation allows a single lysine to coordinate two nickel ions.</text>
</comment>
<comment type="similarity">
    <text evidence="1">Belongs to the metallo-dependent hydrolases superfamily. Urease alpha subunit family.</text>
</comment>
<comment type="sequence caution" evidence="3">
    <conflict type="erroneous initiation">
        <sequence resource="EMBL-CDS" id="ABE74767"/>
    </conflict>
</comment>
<protein>
    <recommendedName>
        <fullName evidence="1">Urease subunit alpha 2</fullName>
        <ecNumber evidence="1">3.5.1.5</ecNumber>
    </recommendedName>
    <alternativeName>
        <fullName evidence="1">Urea amidohydrolase subunit alpha 2</fullName>
    </alternativeName>
</protein>